<organism>
    <name type="scientific">Sinorhizobium medicae (strain WSM419)</name>
    <name type="common">Ensifer medicae</name>
    <dbReference type="NCBI Taxonomy" id="366394"/>
    <lineage>
        <taxon>Bacteria</taxon>
        <taxon>Pseudomonadati</taxon>
        <taxon>Pseudomonadota</taxon>
        <taxon>Alphaproteobacteria</taxon>
        <taxon>Hyphomicrobiales</taxon>
        <taxon>Rhizobiaceae</taxon>
        <taxon>Sinorhizobium/Ensifer group</taxon>
        <taxon>Sinorhizobium</taxon>
    </lineage>
</organism>
<evidence type="ECO:0000255" key="1">
    <source>
        <dbReference type="HAMAP-Rule" id="MF_01456"/>
    </source>
</evidence>
<keyword id="KW-0997">Cell inner membrane</keyword>
<keyword id="KW-1003">Cell membrane</keyword>
<keyword id="KW-0472">Membrane</keyword>
<keyword id="KW-0520">NAD</keyword>
<keyword id="KW-0874">Quinone</keyword>
<keyword id="KW-1278">Translocase</keyword>
<keyword id="KW-0812">Transmembrane</keyword>
<keyword id="KW-1133">Transmembrane helix</keyword>
<keyword id="KW-0813">Transport</keyword>
<keyword id="KW-0830">Ubiquinone</keyword>
<gene>
    <name evidence="1" type="primary">nuoK1</name>
    <name type="ordered locus">Smed_0900</name>
</gene>
<protein>
    <recommendedName>
        <fullName evidence="1">NADH-quinone oxidoreductase subunit K 1</fullName>
        <ecNumber evidence="1">7.1.1.-</ecNumber>
    </recommendedName>
    <alternativeName>
        <fullName evidence="1">NADH dehydrogenase I subunit K 1</fullName>
    </alternativeName>
    <alternativeName>
        <fullName evidence="1">NDH-1 subunit K 1</fullName>
    </alternativeName>
</protein>
<reference key="1">
    <citation type="submission" date="2007-06" db="EMBL/GenBank/DDBJ databases">
        <title>Complete sequence of Sinorhizobium medicae WSM419 chromosome.</title>
        <authorList>
            <consortium name="US DOE Joint Genome Institute"/>
            <person name="Copeland A."/>
            <person name="Lucas S."/>
            <person name="Lapidus A."/>
            <person name="Barry K."/>
            <person name="Glavina del Rio T."/>
            <person name="Dalin E."/>
            <person name="Tice H."/>
            <person name="Pitluck S."/>
            <person name="Chain P."/>
            <person name="Malfatti S."/>
            <person name="Shin M."/>
            <person name="Vergez L."/>
            <person name="Schmutz J."/>
            <person name="Larimer F."/>
            <person name="Land M."/>
            <person name="Hauser L."/>
            <person name="Kyrpides N."/>
            <person name="Mikhailova N."/>
            <person name="Reeve W.G."/>
            <person name="Richardson P."/>
        </authorList>
    </citation>
    <scope>NUCLEOTIDE SEQUENCE [LARGE SCALE GENOMIC DNA]</scope>
    <source>
        <strain>WSM419</strain>
    </source>
</reference>
<accession>A6U7X5</accession>
<proteinExistence type="inferred from homology"/>
<sequence>MEIGISHYLTVSAILFTLGVFGIFLNRKNVIIILMSVELILLAVNINMVAFSAFLNDITGQVFALFILTVAAAEAAIGLAILVVFYRNRGSIAVEDVNMMKG</sequence>
<feature type="chain" id="PRO_0000390243" description="NADH-quinone oxidoreductase subunit K 1">
    <location>
        <begin position="1"/>
        <end position="102"/>
    </location>
</feature>
<feature type="transmembrane region" description="Helical" evidence="1">
    <location>
        <begin position="5"/>
        <end position="25"/>
    </location>
</feature>
<feature type="transmembrane region" description="Helical" evidence="1">
    <location>
        <begin position="31"/>
        <end position="51"/>
    </location>
</feature>
<feature type="transmembrane region" description="Helical" evidence="1">
    <location>
        <begin position="65"/>
        <end position="85"/>
    </location>
</feature>
<comment type="function">
    <text evidence="1">NDH-1 shuttles electrons from NADH, via FMN and iron-sulfur (Fe-S) centers, to quinones in the respiratory chain. The immediate electron acceptor for the enzyme in this species is believed to be ubiquinone. Couples the redox reaction to proton translocation (for every two electrons transferred, four hydrogen ions are translocated across the cytoplasmic membrane), and thus conserves the redox energy in a proton gradient.</text>
</comment>
<comment type="catalytic activity">
    <reaction evidence="1">
        <text>a quinone + NADH + 5 H(+)(in) = a quinol + NAD(+) + 4 H(+)(out)</text>
        <dbReference type="Rhea" id="RHEA:57888"/>
        <dbReference type="ChEBI" id="CHEBI:15378"/>
        <dbReference type="ChEBI" id="CHEBI:24646"/>
        <dbReference type="ChEBI" id="CHEBI:57540"/>
        <dbReference type="ChEBI" id="CHEBI:57945"/>
        <dbReference type="ChEBI" id="CHEBI:132124"/>
    </reaction>
</comment>
<comment type="subunit">
    <text evidence="1">NDH-1 is composed of 14 different subunits. Subunits NuoA, H, J, K, L, M, N constitute the membrane sector of the complex.</text>
</comment>
<comment type="subcellular location">
    <subcellularLocation>
        <location evidence="1">Cell inner membrane</location>
        <topology evidence="1">Multi-pass membrane protein</topology>
    </subcellularLocation>
</comment>
<comment type="similarity">
    <text evidence="1">Belongs to the complex I subunit 4L family.</text>
</comment>
<name>NUOK1_SINMW</name>
<dbReference type="EC" id="7.1.1.-" evidence="1"/>
<dbReference type="EMBL" id="CP000738">
    <property type="protein sequence ID" value="ABR59755.1"/>
    <property type="molecule type" value="Genomic_DNA"/>
</dbReference>
<dbReference type="RefSeq" id="YP_001326590.1">
    <property type="nucleotide sequence ID" value="NC_009636.1"/>
</dbReference>
<dbReference type="SMR" id="A6U7X5"/>
<dbReference type="STRING" id="366394.Smed_0900"/>
<dbReference type="KEGG" id="smd:Smed_0900"/>
<dbReference type="PATRIC" id="fig|366394.8.peg.4014"/>
<dbReference type="eggNOG" id="COG0713">
    <property type="taxonomic scope" value="Bacteria"/>
</dbReference>
<dbReference type="HOGENOM" id="CLU_144724_2_0_5"/>
<dbReference type="OrthoDB" id="9811124at2"/>
<dbReference type="Proteomes" id="UP000001108">
    <property type="component" value="Chromosome"/>
</dbReference>
<dbReference type="GO" id="GO:0030964">
    <property type="term" value="C:NADH dehydrogenase complex"/>
    <property type="evidence" value="ECO:0007669"/>
    <property type="project" value="TreeGrafter"/>
</dbReference>
<dbReference type="GO" id="GO:0005886">
    <property type="term" value="C:plasma membrane"/>
    <property type="evidence" value="ECO:0007669"/>
    <property type="project" value="UniProtKB-SubCell"/>
</dbReference>
<dbReference type="GO" id="GO:0050136">
    <property type="term" value="F:NADH:ubiquinone reductase (non-electrogenic) activity"/>
    <property type="evidence" value="ECO:0007669"/>
    <property type="project" value="UniProtKB-UniRule"/>
</dbReference>
<dbReference type="GO" id="GO:0048038">
    <property type="term" value="F:quinone binding"/>
    <property type="evidence" value="ECO:0007669"/>
    <property type="project" value="UniProtKB-KW"/>
</dbReference>
<dbReference type="GO" id="GO:0042773">
    <property type="term" value="P:ATP synthesis coupled electron transport"/>
    <property type="evidence" value="ECO:0007669"/>
    <property type="project" value="InterPro"/>
</dbReference>
<dbReference type="FunFam" id="1.10.287.3510:FF:000001">
    <property type="entry name" value="NADH-quinone oxidoreductase subunit K"/>
    <property type="match status" value="1"/>
</dbReference>
<dbReference type="Gene3D" id="1.10.287.3510">
    <property type="match status" value="1"/>
</dbReference>
<dbReference type="HAMAP" id="MF_01456">
    <property type="entry name" value="NDH1_NuoK"/>
    <property type="match status" value="1"/>
</dbReference>
<dbReference type="InterPro" id="IPR001133">
    <property type="entry name" value="NADH_UbQ_OxRdtase_chain4L/K"/>
</dbReference>
<dbReference type="InterPro" id="IPR039428">
    <property type="entry name" value="NUOK/Mnh_C1-like"/>
</dbReference>
<dbReference type="NCBIfam" id="NF004320">
    <property type="entry name" value="PRK05715.1-2"/>
    <property type="match status" value="1"/>
</dbReference>
<dbReference type="NCBIfam" id="NF004321">
    <property type="entry name" value="PRK05715.1-3"/>
    <property type="match status" value="1"/>
</dbReference>
<dbReference type="NCBIfam" id="NF004323">
    <property type="entry name" value="PRK05715.1-5"/>
    <property type="match status" value="1"/>
</dbReference>
<dbReference type="PANTHER" id="PTHR11434:SF21">
    <property type="entry name" value="NADH DEHYDROGENASE SUBUNIT 4L-RELATED"/>
    <property type="match status" value="1"/>
</dbReference>
<dbReference type="PANTHER" id="PTHR11434">
    <property type="entry name" value="NADH-UBIQUINONE OXIDOREDUCTASE SUBUNIT ND4L"/>
    <property type="match status" value="1"/>
</dbReference>
<dbReference type="Pfam" id="PF00420">
    <property type="entry name" value="Oxidored_q2"/>
    <property type="match status" value="1"/>
</dbReference>